<evidence type="ECO:0000255" key="1">
    <source>
        <dbReference type="PROSITE-ProRule" id="PRU00441"/>
    </source>
</evidence>
<evidence type="ECO:0000305" key="2"/>
<keyword id="KW-1003">Cell membrane</keyword>
<keyword id="KW-0472">Membrane</keyword>
<keyword id="KW-1185">Reference proteome</keyword>
<keyword id="KW-0812">Transmembrane</keyword>
<keyword id="KW-1133">Transmembrane helix</keyword>
<keyword id="KW-0813">Transport</keyword>
<comment type="function">
    <text>Probably part of a binding-protein-dependent transport system. Probably responsible for the translocation of the substrate across the membrane.</text>
</comment>
<comment type="subcellular location">
    <subcellularLocation>
        <location evidence="2">Cell membrane</location>
        <topology evidence="1">Multi-pass membrane protein</topology>
    </subcellularLocation>
</comment>
<comment type="similarity">
    <text evidence="2">Belongs to the binding-protein-dependent transport system permease family. MalFG subfamily.</text>
</comment>
<protein>
    <recommendedName>
        <fullName>Probable ABC transporter permease protein MG188</fullName>
    </recommendedName>
</protein>
<feature type="chain" id="PRO_0000060285" description="Probable ABC transporter permease protein MG188">
    <location>
        <begin position="1"/>
        <end position="329"/>
    </location>
</feature>
<feature type="transmembrane region" description="Helical" evidence="1">
    <location>
        <begin position="30"/>
        <end position="50"/>
    </location>
</feature>
<feature type="transmembrane region" description="Helical" evidence="1">
    <location>
        <begin position="96"/>
        <end position="116"/>
    </location>
</feature>
<feature type="transmembrane region" description="Helical" evidence="1">
    <location>
        <begin position="128"/>
        <end position="148"/>
    </location>
</feature>
<feature type="transmembrane region" description="Helical" evidence="1">
    <location>
        <begin position="176"/>
        <end position="196"/>
    </location>
</feature>
<feature type="transmembrane region" description="Helical" evidence="1">
    <location>
        <begin position="234"/>
        <end position="254"/>
    </location>
</feature>
<feature type="transmembrane region" description="Helical" evidence="1">
    <location>
        <begin position="283"/>
        <end position="303"/>
    </location>
</feature>
<feature type="domain" description="ABC transmembrane type-1" evidence="1">
    <location>
        <begin position="88"/>
        <end position="303"/>
    </location>
</feature>
<name>Y188_MYCGE</name>
<gene>
    <name type="ordered locus">MG188</name>
</gene>
<proteinExistence type="inferred from homology"/>
<dbReference type="EMBL" id="L43967">
    <property type="protein sequence ID" value="AAC71407.1"/>
    <property type="molecule type" value="Genomic_DNA"/>
</dbReference>
<dbReference type="PIR" id="H64220">
    <property type="entry name" value="H64220"/>
</dbReference>
<dbReference type="RefSeq" id="WP_009886002.1">
    <property type="nucleotide sequence ID" value="NC_000908.2"/>
</dbReference>
<dbReference type="SMR" id="P47434"/>
<dbReference type="FunCoup" id="P47434">
    <property type="interactions" value="41"/>
</dbReference>
<dbReference type="STRING" id="243273.MG_188"/>
<dbReference type="GeneID" id="88282320"/>
<dbReference type="KEGG" id="mge:MG_188"/>
<dbReference type="eggNOG" id="COG1175">
    <property type="taxonomic scope" value="Bacteria"/>
</dbReference>
<dbReference type="HOGENOM" id="CLU_016047_0_2_14"/>
<dbReference type="InParanoid" id="P47434"/>
<dbReference type="OrthoDB" id="42615at2"/>
<dbReference type="BioCyc" id="MGEN243273:G1GJ2-216-MONOMER"/>
<dbReference type="Proteomes" id="UP000000807">
    <property type="component" value="Chromosome"/>
</dbReference>
<dbReference type="GO" id="GO:0005886">
    <property type="term" value="C:plasma membrane"/>
    <property type="evidence" value="ECO:0007669"/>
    <property type="project" value="UniProtKB-SubCell"/>
</dbReference>
<dbReference type="GO" id="GO:0055085">
    <property type="term" value="P:transmembrane transport"/>
    <property type="evidence" value="ECO:0007669"/>
    <property type="project" value="InterPro"/>
</dbReference>
<dbReference type="CDD" id="cd06261">
    <property type="entry name" value="TM_PBP2"/>
    <property type="match status" value="1"/>
</dbReference>
<dbReference type="Gene3D" id="1.10.3720.10">
    <property type="entry name" value="MetI-like"/>
    <property type="match status" value="1"/>
</dbReference>
<dbReference type="InterPro" id="IPR051393">
    <property type="entry name" value="ABC_transporter_permease"/>
</dbReference>
<dbReference type="InterPro" id="IPR000515">
    <property type="entry name" value="MetI-like"/>
</dbReference>
<dbReference type="InterPro" id="IPR035906">
    <property type="entry name" value="MetI-like_sf"/>
</dbReference>
<dbReference type="PANTHER" id="PTHR30193">
    <property type="entry name" value="ABC TRANSPORTER PERMEASE PROTEIN"/>
    <property type="match status" value="1"/>
</dbReference>
<dbReference type="PANTHER" id="PTHR30193:SF37">
    <property type="entry name" value="INNER MEMBRANE ABC TRANSPORTER PERMEASE PROTEIN YCJO"/>
    <property type="match status" value="1"/>
</dbReference>
<dbReference type="Pfam" id="PF00528">
    <property type="entry name" value="BPD_transp_1"/>
    <property type="match status" value="1"/>
</dbReference>
<dbReference type="SUPFAM" id="SSF161098">
    <property type="entry name" value="MetI-like"/>
    <property type="match status" value="1"/>
</dbReference>
<dbReference type="PROSITE" id="PS50928">
    <property type="entry name" value="ABC_TM1"/>
    <property type="match status" value="1"/>
</dbReference>
<accession>P47434</accession>
<organism>
    <name type="scientific">Mycoplasma genitalium (strain ATCC 33530 / DSM 19775 / NCTC 10195 / G37)</name>
    <name type="common">Mycoplasmoides genitalium</name>
    <dbReference type="NCBI Taxonomy" id="243273"/>
    <lineage>
        <taxon>Bacteria</taxon>
        <taxon>Bacillati</taxon>
        <taxon>Mycoplasmatota</taxon>
        <taxon>Mycoplasmoidales</taxon>
        <taxon>Mycoplasmoidaceae</taxon>
        <taxon>Mycoplasmoides</taxon>
    </lineage>
</organism>
<sequence>MFKWLLKHHNQPHSLQLGLLDQPLPFWKPFLLFLPALLTTILFTIIPFFLSLQKGFSANSDLYDLSSQSFSLRTFQDLFSESNFVLGLRNSFLYSLISLPFSIIIAIVIASAIVFVYKKLLRGFWQTVFFLPYVTSGVAISIAFVYIFDSASGILNTVFNVNTKWLDSGSRDTFNALWAILIFGVWKNLAFNVLIISTAMLSVNPQLYKVASLDSANPVRQFFKITLPSIRPTLIFLTTLLILGGMQVFPLALFENKPEEAVANGGNSILLYIFQQIQSGNTNLAGAATLVLFVLGVCYGLVLRNGFYLIEWLQWKIKQLYVQKQLTLY</sequence>
<reference key="1">
    <citation type="journal article" date="1995" name="Science">
        <title>The minimal gene complement of Mycoplasma genitalium.</title>
        <authorList>
            <person name="Fraser C.M."/>
            <person name="Gocayne J.D."/>
            <person name="White O."/>
            <person name="Adams M.D."/>
            <person name="Clayton R.A."/>
            <person name="Fleischmann R.D."/>
            <person name="Bult C.J."/>
            <person name="Kerlavage A.R."/>
            <person name="Sutton G.G."/>
            <person name="Kelley J.M."/>
            <person name="Fritchman J.L."/>
            <person name="Weidman J.F."/>
            <person name="Small K.V."/>
            <person name="Sandusky M."/>
            <person name="Fuhrmann J.L."/>
            <person name="Nguyen D.T."/>
            <person name="Utterback T.R."/>
            <person name="Saudek D.M."/>
            <person name="Phillips C.A."/>
            <person name="Merrick J.M."/>
            <person name="Tomb J.-F."/>
            <person name="Dougherty B.A."/>
            <person name="Bott K.F."/>
            <person name="Hu P.-C."/>
            <person name="Lucier T.S."/>
            <person name="Peterson S.N."/>
            <person name="Smith H.O."/>
            <person name="Hutchison C.A. III"/>
            <person name="Venter J.C."/>
        </authorList>
    </citation>
    <scope>NUCLEOTIDE SEQUENCE [LARGE SCALE GENOMIC DNA]</scope>
    <source>
        <strain>ATCC 33530 / DSM 19775 / NCTC 10195 / G37</strain>
    </source>
</reference>